<organism>
    <name type="scientific">Mus musculus</name>
    <name type="common">Mouse</name>
    <dbReference type="NCBI Taxonomy" id="10090"/>
    <lineage>
        <taxon>Eukaryota</taxon>
        <taxon>Metazoa</taxon>
        <taxon>Chordata</taxon>
        <taxon>Craniata</taxon>
        <taxon>Vertebrata</taxon>
        <taxon>Euteleostomi</taxon>
        <taxon>Mammalia</taxon>
        <taxon>Eutheria</taxon>
        <taxon>Euarchontoglires</taxon>
        <taxon>Glires</taxon>
        <taxon>Rodentia</taxon>
        <taxon>Myomorpha</taxon>
        <taxon>Muroidea</taxon>
        <taxon>Muridae</taxon>
        <taxon>Murinae</taxon>
        <taxon>Mus</taxon>
        <taxon>Mus</taxon>
    </lineage>
</organism>
<proteinExistence type="evidence at protein level"/>
<comment type="function">
    <text evidence="10">Probable proton-coupled zinc ion antiporter mediating the import of zinc from cytoplasm into synaptic vesicles and participating to cellular zinc ion homeostasis in the brain.</text>
</comment>
<comment type="catalytic activity">
    <reaction evidence="3">
        <text>Zn(2+)(in) + 2 H(+)(out) = Zn(2+)(out) + 2 H(+)(in)</text>
        <dbReference type="Rhea" id="RHEA:72627"/>
        <dbReference type="ChEBI" id="CHEBI:15378"/>
        <dbReference type="ChEBI" id="CHEBI:29105"/>
    </reaction>
</comment>
<comment type="subunit">
    <text evidence="3 6">Homodimer. Homodimerization is negligible compared to the human protein. It could explain the lower efficiency of zinc transport. Interacts with TMEM163 (By similarity).</text>
</comment>
<comment type="subcellular location">
    <subcellularLocation>
        <location evidence="9 13 14">Cytoplasmic vesicle</location>
        <location evidence="9 13 14">Secretory vesicle</location>
        <location evidence="9 13 14">Synaptic vesicle membrane</location>
        <topology evidence="13">Multi-pass membrane protein</topology>
    </subcellularLocation>
    <subcellularLocation>
        <location evidence="7">Synapse</location>
        <location evidence="7">Synaptosome</location>
    </subcellularLocation>
    <subcellularLocation>
        <location evidence="3">Late endosome membrane</location>
        <topology evidence="4">Multi-pass membrane protein</topology>
    </subcellularLocation>
    <subcellularLocation>
        <location evidence="3">Lysosome membrane</location>
        <topology evidence="4">Multi-pass membrane protein</topology>
    </subcellularLocation>
</comment>
<comment type="tissue specificity">
    <text evidence="8 10">Expression is restricted to brain (at protein level). In the brain, most abundant in hippocampus and cerebral cortex. The mRNA is also detected in testis, expression being restricted to germ cells and highest in pachytene spermatocytes and round spermatids.</text>
</comment>
<comment type="developmental stage">
    <text evidence="10">In brain expression is negligible at birth, then increases linearly, reaching a maximum at about 3 weeks postpartum.</text>
</comment>
<comment type="disruption phenotype">
    <text evidence="10">Homozygous knockout mice lacking Slc30a3 do not display overt phenotype with morphology, body weight, lifespan, fertility, litter size being normal (PubMed:9990090). Zinc ions are eliminated from synaptic vesicles in brain of the knockout mice and the overall levels of zinc in brain is decreased (PubMed:9990090).</text>
</comment>
<comment type="similarity">
    <text evidence="12">Belongs to the cation diffusion facilitator (CDF) transporter (TC 2.A.4) family. SLC30A subfamily.</text>
</comment>
<sequence>MEPSLATGGSETTRLVSARDRSSAGGGLRLKSLFTEPSEPLPEEPKLEGMAFHHCHKDPVPQSGLSPERVQARRQLYAACAVCFIFMAGEVVGGYLAHSLAIMTDAAHLLADIGSMLASLFSLWLSTRPATRTMTFGWHRSETLGALASVVSLWIVTGILLYLAFLRLLHSDYHIEAGAMLLTASIAVCANLLMAFVLHQTGAPHSHGSTGAEYAPLEEGHGYPMSLGNTSVRAAFVHVLGDLLQSFGVLAASILIYFKPQYKVADPISTFLFSICALGSTAPTLRDVLLVLMEGAPRSVEFEPVRDTLLSVPGVRATHDLHLWALTLTYHVASAHLAIDSTADPEAVLAEASSRLYSRFGFSSCTLQVEQYQPEMAQCLRCQEPSQA</sequence>
<keyword id="KW-0050">Antiport</keyword>
<keyword id="KW-0968">Cytoplasmic vesicle</keyword>
<keyword id="KW-0967">Endosome</keyword>
<keyword id="KW-0406">Ion transport</keyword>
<keyword id="KW-0458">Lysosome</keyword>
<keyword id="KW-0472">Membrane</keyword>
<keyword id="KW-0479">Metal-binding</keyword>
<keyword id="KW-0597">Phosphoprotein</keyword>
<keyword id="KW-1185">Reference proteome</keyword>
<keyword id="KW-0770">Synapse</keyword>
<keyword id="KW-0771">Synaptosome</keyword>
<keyword id="KW-0812">Transmembrane</keyword>
<keyword id="KW-1133">Transmembrane helix</keyword>
<keyword id="KW-0813">Transport</keyword>
<keyword id="KW-0862">Zinc</keyword>
<keyword id="KW-0864">Zinc transport</keyword>
<protein>
    <recommendedName>
        <fullName evidence="14">Probable proton-coupled zinc antiporter SLC30A3</fullName>
    </recommendedName>
    <alternativeName>
        <fullName evidence="15">Solute carrier family 30 member 3</fullName>
    </alternativeName>
    <alternativeName>
        <fullName evidence="14">Zinc transporter 3</fullName>
        <shortName evidence="11">ZnT-3</shortName>
    </alternativeName>
</protein>
<evidence type="ECO:0000250" key="1">
    <source>
        <dbReference type="UniProtKB" id="Q6QIX3"/>
    </source>
</evidence>
<evidence type="ECO:0000250" key="2">
    <source>
        <dbReference type="UniProtKB" id="Q8IWU4"/>
    </source>
</evidence>
<evidence type="ECO:0000250" key="3">
    <source>
        <dbReference type="UniProtKB" id="Q99726"/>
    </source>
</evidence>
<evidence type="ECO:0000255" key="4"/>
<evidence type="ECO:0000256" key="5">
    <source>
        <dbReference type="SAM" id="MobiDB-lite"/>
    </source>
</evidence>
<evidence type="ECO:0000269" key="6">
    <source>
    </source>
</evidence>
<evidence type="ECO:0000269" key="7">
    <source>
    </source>
</evidence>
<evidence type="ECO:0000269" key="8">
    <source>
    </source>
</evidence>
<evidence type="ECO:0000269" key="9">
    <source>
    </source>
</evidence>
<evidence type="ECO:0000269" key="10">
    <source>
    </source>
</evidence>
<evidence type="ECO:0000303" key="11">
    <source>
    </source>
</evidence>
<evidence type="ECO:0000305" key="12"/>
<evidence type="ECO:0000305" key="13">
    <source>
    </source>
</evidence>
<evidence type="ECO:0000305" key="14">
    <source>
    </source>
</evidence>
<evidence type="ECO:0000312" key="15">
    <source>
        <dbReference type="MGI" id="MGI:1345280"/>
    </source>
</evidence>
<dbReference type="EMBL" id="U76007">
    <property type="protein sequence ID" value="AAB39731.1"/>
    <property type="molecule type" value="mRNA"/>
</dbReference>
<dbReference type="EMBL" id="U76009">
    <property type="protein sequence ID" value="AAB39733.1"/>
    <property type="status" value="ALT_SEQ"/>
    <property type="molecule type" value="Genomic_DNA"/>
</dbReference>
<dbReference type="EMBL" id="U76008">
    <property type="protein sequence ID" value="AAB39733.1"/>
    <property type="status" value="JOINED"/>
    <property type="molecule type" value="Genomic_DNA"/>
</dbReference>
<dbReference type="CCDS" id="CCDS51455.1"/>
<dbReference type="RefSeq" id="NP_035903.2">
    <property type="nucleotide sequence ID" value="NM_011773.4"/>
</dbReference>
<dbReference type="SMR" id="P97441"/>
<dbReference type="BioGRID" id="204705">
    <property type="interactions" value="4"/>
</dbReference>
<dbReference type="FunCoup" id="P97441">
    <property type="interactions" value="61"/>
</dbReference>
<dbReference type="IntAct" id="P97441">
    <property type="interactions" value="3"/>
</dbReference>
<dbReference type="MINT" id="P97441"/>
<dbReference type="STRING" id="10090.ENSMUSP00000031037"/>
<dbReference type="GlyGen" id="P97441">
    <property type="glycosylation" value="1 site, 1 O-linked glycan (1 site)"/>
</dbReference>
<dbReference type="iPTMnet" id="P97441"/>
<dbReference type="PhosphoSitePlus" id="P97441"/>
<dbReference type="SwissPalm" id="P97441"/>
<dbReference type="PaxDb" id="10090-ENSMUSP00000031037"/>
<dbReference type="PeptideAtlas" id="P97441"/>
<dbReference type="ProteomicsDB" id="302147"/>
<dbReference type="Antibodypedia" id="47345">
    <property type="antibodies" value="153 antibodies from 24 providers"/>
</dbReference>
<dbReference type="DNASU" id="22784"/>
<dbReference type="Ensembl" id="ENSMUST00000031037.14">
    <property type="protein sequence ID" value="ENSMUSP00000031037.8"/>
    <property type="gene ID" value="ENSMUSG00000029151.15"/>
</dbReference>
<dbReference type="GeneID" id="22784"/>
<dbReference type="KEGG" id="mmu:22784"/>
<dbReference type="UCSC" id="uc008wxa.2">
    <property type="organism name" value="mouse"/>
</dbReference>
<dbReference type="AGR" id="MGI:1345280"/>
<dbReference type="CTD" id="7781"/>
<dbReference type="MGI" id="MGI:1345280">
    <property type="gene designation" value="Slc30a3"/>
</dbReference>
<dbReference type="VEuPathDB" id="HostDB:ENSMUSG00000029151"/>
<dbReference type="eggNOG" id="KOG1482">
    <property type="taxonomic scope" value="Eukaryota"/>
</dbReference>
<dbReference type="GeneTree" id="ENSGT00940000161480"/>
<dbReference type="InParanoid" id="P97441"/>
<dbReference type="OMA" id="RTWGWAR"/>
<dbReference type="OrthoDB" id="9944568at2759"/>
<dbReference type="PhylomeDB" id="P97441"/>
<dbReference type="TreeFam" id="TF313382"/>
<dbReference type="BioGRID-ORCS" id="22784">
    <property type="hits" value="3 hits in 78 CRISPR screens"/>
</dbReference>
<dbReference type="ChiTaRS" id="Slc30a3">
    <property type="organism name" value="mouse"/>
</dbReference>
<dbReference type="PRO" id="PR:P97441"/>
<dbReference type="Proteomes" id="UP000000589">
    <property type="component" value="Chromosome 5"/>
</dbReference>
<dbReference type="RNAct" id="P97441">
    <property type="molecule type" value="protein"/>
</dbReference>
<dbReference type="Bgee" id="ENSMUSG00000029151">
    <property type="expression patterns" value="Expressed in entorhinal cortex and 145 other cell types or tissues"/>
</dbReference>
<dbReference type="ExpressionAtlas" id="P97441">
    <property type="expression patterns" value="baseline and differential"/>
</dbReference>
<dbReference type="GO" id="GO:0098978">
    <property type="term" value="C:glutamatergic synapse"/>
    <property type="evidence" value="ECO:0000314"/>
    <property type="project" value="SynGO"/>
</dbReference>
<dbReference type="GO" id="GO:0097457">
    <property type="term" value="C:hippocampal mossy fiber"/>
    <property type="evidence" value="ECO:0000314"/>
    <property type="project" value="MGI"/>
</dbReference>
<dbReference type="GO" id="GO:0098686">
    <property type="term" value="C:hippocampal mossy fiber to CA3 synapse"/>
    <property type="evidence" value="ECO:0000314"/>
    <property type="project" value="SynGO"/>
</dbReference>
<dbReference type="GO" id="GO:0031902">
    <property type="term" value="C:late endosome membrane"/>
    <property type="evidence" value="ECO:0007669"/>
    <property type="project" value="UniProtKB-SubCell"/>
</dbReference>
<dbReference type="GO" id="GO:0005765">
    <property type="term" value="C:lysosomal membrane"/>
    <property type="evidence" value="ECO:0007669"/>
    <property type="project" value="UniProtKB-SubCell"/>
</dbReference>
<dbReference type="GO" id="GO:1990742">
    <property type="term" value="C:microvesicle"/>
    <property type="evidence" value="ECO:0000314"/>
    <property type="project" value="MGI"/>
</dbReference>
<dbReference type="GO" id="GO:0043005">
    <property type="term" value="C:neuron projection"/>
    <property type="evidence" value="ECO:0000314"/>
    <property type="project" value="UniProtKB"/>
</dbReference>
<dbReference type="GO" id="GO:0030672">
    <property type="term" value="C:synaptic vesicle membrane"/>
    <property type="evidence" value="ECO:0000314"/>
    <property type="project" value="UniProtKB"/>
</dbReference>
<dbReference type="GO" id="GO:0015297">
    <property type="term" value="F:antiporter activity"/>
    <property type="evidence" value="ECO:0007669"/>
    <property type="project" value="UniProtKB-KW"/>
</dbReference>
<dbReference type="GO" id="GO:0046872">
    <property type="term" value="F:metal ion binding"/>
    <property type="evidence" value="ECO:0007669"/>
    <property type="project" value="UniProtKB-KW"/>
</dbReference>
<dbReference type="GO" id="GO:0005385">
    <property type="term" value="F:zinc ion transmembrane transporter activity"/>
    <property type="evidence" value="ECO:0000314"/>
    <property type="project" value="UniProtKB"/>
</dbReference>
<dbReference type="GO" id="GO:0010312">
    <property type="term" value="P:detoxification of zinc ion"/>
    <property type="evidence" value="ECO:0000304"/>
    <property type="project" value="BHF-UCL"/>
</dbReference>
<dbReference type="GO" id="GO:0051050">
    <property type="term" value="P:positive regulation of transport"/>
    <property type="evidence" value="ECO:0000316"/>
    <property type="project" value="MGI"/>
</dbReference>
<dbReference type="GO" id="GO:0140916">
    <property type="term" value="P:zinc ion import into lysosome"/>
    <property type="evidence" value="ECO:0007669"/>
    <property type="project" value="Ensembl"/>
</dbReference>
<dbReference type="GO" id="GO:0099180">
    <property type="term" value="P:zinc ion import into synaptic vesicle"/>
    <property type="evidence" value="ECO:0000314"/>
    <property type="project" value="SynGO"/>
</dbReference>
<dbReference type="GO" id="GO:0071577">
    <property type="term" value="P:zinc ion transmembrane transport"/>
    <property type="evidence" value="ECO:0000250"/>
    <property type="project" value="UniProtKB"/>
</dbReference>
<dbReference type="FunFam" id="1.20.1510.10:FF:000002">
    <property type="entry name" value="zinc transporter 3 isoform X1"/>
    <property type="match status" value="1"/>
</dbReference>
<dbReference type="Gene3D" id="1.20.1510.10">
    <property type="entry name" value="Cation efflux protein transmembrane domain"/>
    <property type="match status" value="1"/>
</dbReference>
<dbReference type="InterPro" id="IPR002524">
    <property type="entry name" value="Cation_efflux"/>
</dbReference>
<dbReference type="InterPro" id="IPR036837">
    <property type="entry name" value="Cation_efflux_CTD_sf"/>
</dbReference>
<dbReference type="InterPro" id="IPR027469">
    <property type="entry name" value="Cation_efflux_TMD_sf"/>
</dbReference>
<dbReference type="InterPro" id="IPR050681">
    <property type="entry name" value="CDF/SLC30A"/>
</dbReference>
<dbReference type="NCBIfam" id="TIGR01297">
    <property type="entry name" value="CDF"/>
    <property type="match status" value="1"/>
</dbReference>
<dbReference type="PANTHER" id="PTHR11562">
    <property type="entry name" value="CATION EFFLUX PROTEIN/ ZINC TRANSPORTER"/>
    <property type="match status" value="1"/>
</dbReference>
<dbReference type="PANTHER" id="PTHR11562:SF30">
    <property type="entry name" value="PROTON-COUPLED ZINC ANTIPORTER SLC30A3-RELATED"/>
    <property type="match status" value="1"/>
</dbReference>
<dbReference type="Pfam" id="PF01545">
    <property type="entry name" value="Cation_efflux"/>
    <property type="match status" value="1"/>
</dbReference>
<dbReference type="SUPFAM" id="SSF160240">
    <property type="entry name" value="Cation efflux protein cytoplasmic domain-like"/>
    <property type="match status" value="1"/>
</dbReference>
<dbReference type="SUPFAM" id="SSF161111">
    <property type="entry name" value="Cation efflux protein transmembrane domain-like"/>
    <property type="match status" value="1"/>
</dbReference>
<gene>
    <name evidence="15" type="primary">Slc30a3</name>
    <name type="synonym">Znt3</name>
</gene>
<reference key="1">
    <citation type="journal article" date="1996" name="Proc. Natl. Acad. Sci. U.S.A.">
        <title>ZnT-3, a putative transporter of zinc into synaptic vesicles.</title>
        <authorList>
            <person name="Palmiter R.D."/>
            <person name="Cole T.B."/>
            <person name="Quaife C.J."/>
            <person name="Findley S.D."/>
        </authorList>
    </citation>
    <scope>NUCLEOTIDE SEQUENCE [GENOMIC DNA / MRNA]</scope>
    <scope>TISSUE SPECIFICITY</scope>
    <source>
        <strain>129</strain>
        <tissue>Brain</tissue>
    </source>
</reference>
<reference key="2">
    <citation type="journal article" date="1997" name="Proc. Natl. Acad. Sci. U.S.A.">
        <title>Ultrastructural localization of zinc transporter-3 (ZnT-3) to synaptic vesicle membranes within mossy fiber boutons in the hippocampus of mouse and monkey.</title>
        <authorList>
            <person name="Wenzel H.J."/>
            <person name="Cole T.B."/>
            <person name="Born D.E."/>
            <person name="Schwartzkroin P.A."/>
            <person name="Palmiter R.D."/>
        </authorList>
    </citation>
    <scope>SUBCELLULAR LOCATION</scope>
</reference>
<reference key="3">
    <citation type="journal article" date="1999" name="Proc. Natl. Acad. Sci. U.S.A.">
        <title>Elimination of zinc from synaptic vesicles in the intact mouse brain by disruption of the ZnT3 gene.</title>
        <authorList>
            <person name="Cole T.B."/>
            <person name="Wenzel H.J."/>
            <person name="Kafer K.E."/>
            <person name="Schwartzkroin P.A."/>
            <person name="Palmiter R.D."/>
        </authorList>
    </citation>
    <scope>FUNCTION</scope>
    <scope>SUBCELLULAR LOCATION</scope>
    <scope>TISSUE SPECIFICITY</scope>
    <scope>DEVELOPMENTAL STAGE</scope>
    <scope>DISRUPTION PHENOTYPE</scope>
</reference>
<reference key="4">
    <citation type="journal article" date="2007" name="Mol. Cell. Proteomics">
        <title>Qualitative and quantitative analyses of protein phosphorylation in naive and stimulated mouse synaptosomal preparations.</title>
        <authorList>
            <person name="Munton R.P."/>
            <person name="Tweedie-Cullen R."/>
            <person name="Livingstone-Zatchej M."/>
            <person name="Weinandy F."/>
            <person name="Waidelich M."/>
            <person name="Longo D."/>
            <person name="Gehrig P."/>
            <person name="Potthast F."/>
            <person name="Rutishauser D."/>
            <person name="Gerrits B."/>
            <person name="Panse C."/>
            <person name="Schlapbach R."/>
            <person name="Mansuy I.M."/>
        </authorList>
    </citation>
    <scope>IDENTIFICATION BY MASS SPECTROMETRY [LARGE SCALE ANALYSIS]</scope>
    <source>
        <tissue>Brain cortex</tissue>
    </source>
</reference>
<reference key="5">
    <citation type="journal article" date="2009" name="PLoS ONE">
        <title>SLC30A3 (ZnT3) oligomerization by dityrosine bonds regulates its subcellular localization and metal transport capacity.</title>
        <authorList>
            <person name="Salazar G."/>
            <person name="Falcon-Perez J.M."/>
            <person name="Harrison R."/>
            <person name="Faundez V."/>
        </authorList>
    </citation>
    <scope>SUBUNIT</scope>
</reference>
<reference key="6">
    <citation type="journal article" date="2010" name="Cell">
        <title>A tissue-specific atlas of mouse protein phosphorylation and expression.</title>
        <authorList>
            <person name="Huttlin E.L."/>
            <person name="Jedrychowski M.P."/>
            <person name="Elias J.E."/>
            <person name="Goswami T."/>
            <person name="Rad R."/>
            <person name="Beausoleil S.A."/>
            <person name="Villen J."/>
            <person name="Haas W."/>
            <person name="Sowa M.E."/>
            <person name="Gygi S.P."/>
        </authorList>
    </citation>
    <scope>IDENTIFICATION BY MASS SPECTROMETRY [LARGE SCALE ANALYSIS]</scope>
    <source>
        <tissue>Brain</tissue>
    </source>
</reference>
<reference key="7">
    <citation type="journal article" date="2011" name="Mol. Biol. Cell">
        <title>The schizophrenia susceptibility factor dysbindin and its associated complex sort cargoes from cell bodies to the synapse.</title>
        <authorList>
            <person name="Larimore J."/>
            <person name="Tornieri K."/>
            <person name="Ryder P.V."/>
            <person name="Gokhale A."/>
            <person name="Zlatic S.A."/>
            <person name="Craige B."/>
            <person name="Lee J.D."/>
            <person name="Talbot K."/>
            <person name="Pare J.F."/>
            <person name="Smith Y."/>
            <person name="Faundez V."/>
        </authorList>
    </citation>
    <scope>SUBCELLULAR LOCATION</scope>
</reference>
<name>ZNT3_MOUSE</name>
<feature type="chain" id="PRO_0000206097" description="Probable proton-coupled zinc antiporter SLC30A3">
    <location>
        <begin position="1"/>
        <end position="388"/>
    </location>
</feature>
<feature type="topological domain" description="Cytoplasmic" evidence="12">
    <location>
        <begin position="1"/>
        <end position="75"/>
    </location>
</feature>
<feature type="transmembrane region" description="Helical" evidence="4">
    <location>
        <begin position="76"/>
        <end position="96"/>
    </location>
</feature>
<feature type="topological domain" description="Lumenal" evidence="12">
    <location>
        <begin position="97"/>
        <end position="105"/>
    </location>
</feature>
<feature type="transmembrane region" description="Helical" evidence="4">
    <location>
        <begin position="106"/>
        <end position="126"/>
    </location>
</feature>
<feature type="topological domain" description="Cytoplasmic" evidence="12">
    <location>
        <begin position="127"/>
        <end position="145"/>
    </location>
</feature>
<feature type="transmembrane region" description="Helical" evidence="4">
    <location>
        <begin position="146"/>
        <end position="166"/>
    </location>
</feature>
<feature type="topological domain" description="Lumenal" evidence="12">
    <location>
        <begin position="167"/>
        <end position="177"/>
    </location>
</feature>
<feature type="transmembrane region" description="Helical" evidence="4">
    <location>
        <begin position="178"/>
        <end position="198"/>
    </location>
</feature>
<feature type="topological domain" description="Cytoplasmic" evidence="12">
    <location>
        <begin position="199"/>
        <end position="235"/>
    </location>
</feature>
<feature type="transmembrane region" description="Helical" evidence="4">
    <location>
        <begin position="236"/>
        <end position="256"/>
    </location>
</feature>
<feature type="topological domain" description="Lumenal" evidence="12">
    <location>
        <begin position="257"/>
        <end position="263"/>
    </location>
</feature>
<feature type="transmembrane region" description="Helical" evidence="4">
    <location>
        <begin position="264"/>
        <end position="284"/>
    </location>
</feature>
<feature type="topological domain" description="Cytoplasmic" evidence="12">
    <location>
        <begin position="285"/>
        <end position="388"/>
    </location>
</feature>
<feature type="region of interest" description="Disordered" evidence="5">
    <location>
        <begin position="1"/>
        <end position="41"/>
    </location>
</feature>
<feature type="binding site" evidence="2">
    <location>
        <position position="108"/>
    </location>
    <ligand>
        <name>Zn(2+)</name>
        <dbReference type="ChEBI" id="CHEBI:29105"/>
        <note>transported zinc</note>
    </ligand>
</feature>
<feature type="binding site" evidence="2">
    <location>
        <position position="112"/>
    </location>
    <ligand>
        <name>Zn(2+)</name>
        <dbReference type="ChEBI" id="CHEBI:29105"/>
        <note>transported zinc</note>
    </ligand>
</feature>
<feature type="binding site" evidence="2">
    <location>
        <position position="238"/>
    </location>
    <ligand>
        <name>Zn(2+)</name>
        <dbReference type="ChEBI" id="CHEBI:29105"/>
        <note>transported zinc</note>
    </ligand>
</feature>
<feature type="binding site" evidence="2">
    <location>
        <position position="242"/>
    </location>
    <ligand>
        <name>Zn(2+)</name>
        <dbReference type="ChEBI" id="CHEBI:29105"/>
        <note>transported zinc</note>
    </ligand>
</feature>
<feature type="modified residue" description="Phosphoserine" evidence="1">
    <location>
        <position position="63"/>
    </location>
</feature>
<feature type="modified residue" description="Phosphoserine" evidence="1">
    <location>
        <position position="66"/>
    </location>
</feature>
<accession>P97441</accession>
<accession>P97511</accession>